<reference key="1">
    <citation type="submission" date="2007-03" db="EMBL/GenBank/DDBJ databases">
        <title>Sequencing analysis of Aethionema grandiflorum chloroplast DNA.</title>
        <authorList>
            <person name="Hosouchi T."/>
            <person name="Tsuruoka H."/>
            <person name="Kotani H."/>
        </authorList>
    </citation>
    <scope>NUCLEOTIDE SEQUENCE [LARGE SCALE GENOMIC DNA]</scope>
</reference>
<geneLocation type="chloroplast"/>
<protein>
    <recommendedName>
        <fullName evidence="1">Large ribosomal subunit protein bL20c</fullName>
    </recommendedName>
    <alternativeName>
        <fullName evidence="2">50S ribosomal protein L20, chloroplastic</fullName>
    </alternativeName>
</protein>
<proteinExistence type="inferred from homology"/>
<keyword id="KW-0150">Chloroplast</keyword>
<keyword id="KW-0934">Plastid</keyword>
<keyword id="KW-0687">Ribonucleoprotein</keyword>
<keyword id="KW-0689">Ribosomal protein</keyword>
<keyword id="KW-0694">RNA-binding</keyword>
<keyword id="KW-0699">rRNA-binding</keyword>
<accession>A4QJM2</accession>
<gene>
    <name evidence="1" type="primary">rpl20</name>
</gene>
<evidence type="ECO:0000255" key="1">
    <source>
        <dbReference type="HAMAP-Rule" id="MF_00382"/>
    </source>
</evidence>
<evidence type="ECO:0000305" key="2"/>
<sequence>MTRIKRGYIARRRRTKIRLFASSFRGAHSRLTRTMTQQRIRALVSAHRDRGRRKRDFRRLWITRINAVIQEMEVFNSYNRFIHNLYKKQVLLNRKILAQIALLNRSCLYTISNEIIK</sequence>
<feature type="chain" id="PRO_0000355484" description="Large ribosomal subunit protein bL20c">
    <location>
        <begin position="1"/>
        <end position="117"/>
    </location>
</feature>
<dbReference type="EMBL" id="AP009367">
    <property type="protein sequence ID" value="BAF49877.1"/>
    <property type="molecule type" value="Genomic_DNA"/>
</dbReference>
<dbReference type="RefSeq" id="YP_001123053.1">
    <property type="nucleotide sequence ID" value="NC_009266.1"/>
</dbReference>
<dbReference type="SMR" id="A4QJM2"/>
<dbReference type="GeneID" id="4962260"/>
<dbReference type="GO" id="GO:0009507">
    <property type="term" value="C:chloroplast"/>
    <property type="evidence" value="ECO:0007669"/>
    <property type="project" value="UniProtKB-SubCell"/>
</dbReference>
<dbReference type="GO" id="GO:1990904">
    <property type="term" value="C:ribonucleoprotein complex"/>
    <property type="evidence" value="ECO:0007669"/>
    <property type="project" value="UniProtKB-KW"/>
</dbReference>
<dbReference type="GO" id="GO:0005840">
    <property type="term" value="C:ribosome"/>
    <property type="evidence" value="ECO:0007669"/>
    <property type="project" value="UniProtKB-KW"/>
</dbReference>
<dbReference type="GO" id="GO:0019843">
    <property type="term" value="F:rRNA binding"/>
    <property type="evidence" value="ECO:0007669"/>
    <property type="project" value="UniProtKB-UniRule"/>
</dbReference>
<dbReference type="GO" id="GO:0003735">
    <property type="term" value="F:structural constituent of ribosome"/>
    <property type="evidence" value="ECO:0007669"/>
    <property type="project" value="InterPro"/>
</dbReference>
<dbReference type="GO" id="GO:0000027">
    <property type="term" value="P:ribosomal large subunit assembly"/>
    <property type="evidence" value="ECO:0007669"/>
    <property type="project" value="UniProtKB-UniRule"/>
</dbReference>
<dbReference type="GO" id="GO:0006412">
    <property type="term" value="P:translation"/>
    <property type="evidence" value="ECO:0007669"/>
    <property type="project" value="InterPro"/>
</dbReference>
<dbReference type="CDD" id="cd07026">
    <property type="entry name" value="Ribosomal_L20"/>
    <property type="match status" value="1"/>
</dbReference>
<dbReference type="FunFam" id="1.10.1900.20:FF:000001">
    <property type="entry name" value="50S ribosomal protein L20"/>
    <property type="match status" value="1"/>
</dbReference>
<dbReference type="Gene3D" id="6.10.160.10">
    <property type="match status" value="1"/>
</dbReference>
<dbReference type="Gene3D" id="1.10.1900.20">
    <property type="entry name" value="Ribosomal protein L20"/>
    <property type="match status" value="1"/>
</dbReference>
<dbReference type="HAMAP" id="MF_00382">
    <property type="entry name" value="Ribosomal_bL20"/>
    <property type="match status" value="1"/>
</dbReference>
<dbReference type="InterPro" id="IPR005813">
    <property type="entry name" value="Ribosomal_bL20"/>
</dbReference>
<dbReference type="InterPro" id="IPR035566">
    <property type="entry name" value="Ribosomal_protein_bL20_C"/>
</dbReference>
<dbReference type="NCBIfam" id="TIGR01032">
    <property type="entry name" value="rplT_bact"/>
    <property type="match status" value="1"/>
</dbReference>
<dbReference type="PANTHER" id="PTHR10986">
    <property type="entry name" value="39S RIBOSOMAL PROTEIN L20"/>
    <property type="match status" value="1"/>
</dbReference>
<dbReference type="Pfam" id="PF00453">
    <property type="entry name" value="Ribosomal_L20"/>
    <property type="match status" value="1"/>
</dbReference>
<dbReference type="PRINTS" id="PR00062">
    <property type="entry name" value="RIBOSOMALL20"/>
</dbReference>
<dbReference type="SUPFAM" id="SSF74731">
    <property type="entry name" value="Ribosomal protein L20"/>
    <property type="match status" value="1"/>
</dbReference>
<name>RK20_AETGR</name>
<organism>
    <name type="scientific">Aethionema grandiflorum</name>
    <name type="common">Persian stone-cress</name>
    <dbReference type="NCBI Taxonomy" id="72657"/>
    <lineage>
        <taxon>Eukaryota</taxon>
        <taxon>Viridiplantae</taxon>
        <taxon>Streptophyta</taxon>
        <taxon>Embryophyta</taxon>
        <taxon>Tracheophyta</taxon>
        <taxon>Spermatophyta</taxon>
        <taxon>Magnoliopsida</taxon>
        <taxon>eudicotyledons</taxon>
        <taxon>Gunneridae</taxon>
        <taxon>Pentapetalae</taxon>
        <taxon>rosids</taxon>
        <taxon>malvids</taxon>
        <taxon>Brassicales</taxon>
        <taxon>Brassicaceae</taxon>
        <taxon>Aethionemeae</taxon>
        <taxon>Aethionema</taxon>
    </lineage>
</organism>
<comment type="function">
    <text evidence="1">Binds directly to 23S ribosomal RNA and is necessary for the in vitro assembly process of the 50S ribosomal subunit. It is not involved in the protein synthesizing functions of that subunit.</text>
</comment>
<comment type="subcellular location">
    <subcellularLocation>
        <location>Plastid</location>
        <location>Chloroplast</location>
    </subcellularLocation>
</comment>
<comment type="similarity">
    <text evidence="1">Belongs to the bacterial ribosomal protein bL20 family.</text>
</comment>